<feature type="chain" id="PRO_0000356206" description="Probable E3 ubiquitin-protein ligase ARI13">
    <location>
        <begin position="1"/>
        <end position="536"/>
    </location>
</feature>
<feature type="zinc finger region" description="RING-type 1" evidence="3">
    <location>
        <begin position="87"/>
        <end position="140"/>
    </location>
</feature>
<feature type="zinc finger region" description="IBR-type" evidence="3">
    <location>
        <begin position="158"/>
        <end position="230"/>
    </location>
</feature>
<feature type="zinc finger region" description="RING-type 2; atypical" evidence="3">
    <location>
        <begin position="277"/>
        <end position="307"/>
    </location>
</feature>
<feature type="zinc finger region" description="RanBP2-type">
    <location>
        <begin position="495"/>
        <end position="526"/>
    </location>
</feature>
<feature type="region of interest" description="TRIAD supradomain" evidence="3">
    <location>
        <begin position="83"/>
        <end position="328"/>
    </location>
</feature>
<feature type="binding site" evidence="3">
    <location>
        <position position="87"/>
    </location>
    <ligand>
        <name>Zn(2+)</name>
        <dbReference type="ChEBI" id="CHEBI:29105"/>
        <label>1</label>
    </ligand>
</feature>
<feature type="binding site" evidence="3">
    <location>
        <position position="90"/>
    </location>
    <ligand>
        <name>Zn(2+)</name>
        <dbReference type="ChEBI" id="CHEBI:29105"/>
        <label>1</label>
    </ligand>
</feature>
<feature type="binding site" evidence="3">
    <location>
        <position position="106"/>
    </location>
    <ligand>
        <name>Zn(2+)</name>
        <dbReference type="ChEBI" id="CHEBI:29105"/>
        <label>2</label>
    </ligand>
</feature>
<feature type="binding site" evidence="3">
    <location>
        <position position="108"/>
    </location>
    <ligand>
        <name>Zn(2+)</name>
        <dbReference type="ChEBI" id="CHEBI:29105"/>
        <label>2</label>
    </ligand>
</feature>
<feature type="binding site" evidence="3">
    <location>
        <position position="111"/>
    </location>
    <ligand>
        <name>Zn(2+)</name>
        <dbReference type="ChEBI" id="CHEBI:29105"/>
        <label>1</label>
    </ligand>
</feature>
<feature type="binding site" evidence="3">
    <location>
        <position position="114"/>
    </location>
    <ligand>
        <name>Zn(2+)</name>
        <dbReference type="ChEBI" id="CHEBI:29105"/>
        <label>1</label>
    </ligand>
</feature>
<feature type="binding site" evidence="3">
    <location>
        <position position="135"/>
    </location>
    <ligand>
        <name>Zn(2+)</name>
        <dbReference type="ChEBI" id="CHEBI:29105"/>
        <label>2</label>
    </ligand>
</feature>
<feature type="binding site" evidence="3">
    <location>
        <position position="140"/>
    </location>
    <ligand>
        <name>Zn(2+)</name>
        <dbReference type="ChEBI" id="CHEBI:29105"/>
        <label>2</label>
    </ligand>
</feature>
<feature type="binding site" evidence="3">
    <location>
        <position position="180"/>
    </location>
    <ligand>
        <name>Zn(2+)</name>
        <dbReference type="ChEBI" id="CHEBI:29105"/>
        <label>3</label>
    </ligand>
</feature>
<feature type="binding site" evidence="3">
    <location>
        <position position="185"/>
    </location>
    <ligand>
        <name>Zn(2+)</name>
        <dbReference type="ChEBI" id="CHEBI:29105"/>
        <label>3</label>
    </ligand>
</feature>
<feature type="binding site" evidence="3">
    <location>
        <position position="210"/>
    </location>
    <ligand>
        <name>Zn(2+)</name>
        <dbReference type="ChEBI" id="CHEBI:29105"/>
        <label>3</label>
    </ligand>
</feature>
<feature type="binding site" evidence="3">
    <location>
        <position position="212"/>
    </location>
    <ligand>
        <name>Zn(2+)</name>
        <dbReference type="ChEBI" id="CHEBI:29105"/>
        <label>3</label>
    </ligand>
</feature>
<feature type="binding site" evidence="3">
    <location>
        <position position="217"/>
    </location>
    <ligand>
        <name>Zn(2+)</name>
        <dbReference type="ChEBI" id="CHEBI:29105"/>
        <label>4</label>
    </ligand>
</feature>
<feature type="binding site" evidence="3">
    <location>
        <position position="220"/>
    </location>
    <ligand>
        <name>Zn(2+)</name>
        <dbReference type="ChEBI" id="CHEBI:29105"/>
        <label>4</label>
    </ligand>
</feature>
<feature type="binding site" evidence="3">
    <location>
        <position position="225"/>
    </location>
    <ligand>
        <name>Zn(2+)</name>
        <dbReference type="ChEBI" id="CHEBI:29105"/>
        <label>4</label>
    </ligand>
</feature>
<feature type="binding site" evidence="3">
    <location>
        <position position="230"/>
    </location>
    <ligand>
        <name>Zn(2+)</name>
        <dbReference type="ChEBI" id="CHEBI:29105"/>
        <label>4</label>
    </ligand>
</feature>
<feature type="binding site" evidence="3">
    <location>
        <position position="277"/>
    </location>
    <ligand>
        <name>Zn(2+)</name>
        <dbReference type="ChEBI" id="CHEBI:29105"/>
        <label>5</label>
    </ligand>
</feature>
<feature type="binding site" evidence="3">
    <location>
        <position position="280"/>
    </location>
    <ligand>
        <name>Zn(2+)</name>
        <dbReference type="ChEBI" id="CHEBI:29105"/>
        <label>5</label>
    </ligand>
</feature>
<feature type="binding site" evidence="3">
    <location>
        <position position="297"/>
    </location>
    <ligand>
        <name>Zn(2+)</name>
        <dbReference type="ChEBI" id="CHEBI:29105"/>
        <label>5</label>
    </ligand>
</feature>
<feature type="binding site" evidence="3">
    <location>
        <position position="299"/>
    </location>
    <ligand>
        <name>Zn(2+)</name>
        <dbReference type="ChEBI" id="CHEBI:29105"/>
        <label>5</label>
    </ligand>
</feature>
<feature type="binding site" evidence="3">
    <location>
        <position position="304"/>
    </location>
    <ligand>
        <name>Zn(2+)</name>
        <dbReference type="ChEBI" id="CHEBI:29105"/>
        <label>6</label>
    </ligand>
</feature>
<feature type="binding site" evidence="3">
    <location>
        <position position="307"/>
    </location>
    <ligand>
        <name>Zn(2+)</name>
        <dbReference type="ChEBI" id="CHEBI:29105"/>
        <label>6</label>
    </ligand>
</feature>
<feature type="binding site" evidence="3">
    <location>
        <position position="314"/>
    </location>
    <ligand>
        <name>Zn(2+)</name>
        <dbReference type="ChEBI" id="CHEBI:29105"/>
        <label>6</label>
    </ligand>
</feature>
<feature type="binding site" evidence="3">
    <location>
        <position position="324"/>
    </location>
    <ligand>
        <name>Zn(2+)</name>
        <dbReference type="ChEBI" id="CHEBI:29105"/>
        <label>6</label>
    </ligand>
</feature>
<keyword id="KW-0479">Metal-binding</keyword>
<keyword id="KW-1185">Reference proteome</keyword>
<keyword id="KW-0677">Repeat</keyword>
<keyword id="KW-0808">Transferase</keyword>
<keyword id="KW-0833">Ubl conjugation pathway</keyword>
<keyword id="KW-0862">Zinc</keyword>
<keyword id="KW-0863">Zinc-finger</keyword>
<evidence type="ECO:0000250" key="1"/>
<evidence type="ECO:0000250" key="2">
    <source>
        <dbReference type="UniProtKB" id="Q9Y4X5"/>
    </source>
</evidence>
<evidence type="ECO:0000255" key="3">
    <source>
        <dbReference type="PROSITE-ProRule" id="PRU01221"/>
    </source>
</evidence>
<evidence type="ECO:0000269" key="4">
    <source>
    </source>
</evidence>
<evidence type="ECO:0000305" key="5"/>
<proteinExistence type="evidence at transcript level"/>
<sequence length="536" mass="61604">MENNREGPYSVLTRDQLKGNMKKQIAEISEIFSLSKPDATVLLMFLRWDSHEVSEFLVENNEKVLSESGLKPVVVDPNQDLYKISSCGICFKTCDDGDYLISTPFCSHMFCKSCWRKYLEKNFYLVEKTQTRISCPHGACQAAVGPDTIQKLTVCDQEMYVEYILRSYIEGNKVLEIKYCPAQDCNYVIEFHQKNHDGADQEDYGFNVVCLCGHIFCWRCMLESHKPVTCNNASDWLFRDLNSLSKESGEKPLSLSSFETREKTYPLSSIKATKKVCPHCLRPADLGTKQYLRFLTCACNGRFCWKCMQPEEAHKTESGFYKFCNVSMTFEGRAPKTLEGRAEPENSCVGLWKASEVSLKQAKSDLQAFEESNIKNPSDLTEKDFTIIRKGLMLIVQCRQVLKWSCVYDYLHAEYEMSKREYLRFLQADATSLVESFSKTLNEEIGRASSATYENFCCVKHKVTIETSNIGNYFYHFIKTLQEGLDDVKVKSYDDYGGLFWLCDRCTYGNTWFHKECLMCSDDIAARVDLSDMSLN</sequence>
<name>ARI13_ARATH</name>
<gene>
    <name type="primary">ARI13</name>
    <name type="ordered locus">At5g63750</name>
    <name type="ORF">MBK5.23</name>
</gene>
<comment type="function">
    <text evidence="1 4">Might act as an E3 ubiquitin-protein ligase, or as part of E3 complex, which accepts ubiquitin from specific E2 ubiquitin-conjugating enzymes and then transfers it to substrates.</text>
</comment>
<comment type="catalytic activity">
    <reaction evidence="2">
        <text>[E2 ubiquitin-conjugating enzyme]-S-ubiquitinyl-L-cysteine + [acceptor protein]-L-lysine = [E2 ubiquitin-conjugating enzyme]-L-cysteine + [acceptor protein]-N(6)-ubiquitinyl-L-lysine.</text>
        <dbReference type="EC" id="2.3.2.31"/>
    </reaction>
</comment>
<comment type="cofactor">
    <cofactor evidence="5">
        <name>Zn(2+)</name>
        <dbReference type="ChEBI" id="CHEBI:29105"/>
    </cofactor>
    <text evidence="5">Binds 4 Zn(2+) ions per subunit.</text>
</comment>
<comment type="pathway">
    <text>Protein modification; protein ubiquitination.</text>
</comment>
<comment type="domain">
    <text evidence="2">Members of the RBR family are atypical E3 ligases. They interact with the E2 conjugating enzyme UBE2L3 and function like HECT-type E3 enzymes: they bind E2s via the first RING-type zinc finger, but require an obligate trans-thiolation step during the ubiquitin transfer, requiring a conserved active site Cys residue in the second RING-type zinc finger. The active site probably forms a thioester intermediate with ubiquitin taken from the active-site cysteine of the E2 before ultimately transferring it to a Lys residue on the substrate.</text>
</comment>
<comment type="similarity">
    <text evidence="5">Belongs to the RBR family. Ariadne subfamily.</text>
</comment>
<comment type="caution">
    <text evidence="5">Lacks two Cys residues in the RING-type zinc finger domain 2 that are conserved features of the family.</text>
</comment>
<comment type="sequence caution" evidence="5">
    <conflict type="miscellaneous discrepancy">
        <sequence resource="EMBL" id="BX833901"/>
    </conflict>
    <text>Sequencing errors.</text>
</comment>
<reference key="1">
    <citation type="journal article" date="2003" name="Plant Physiol.">
        <title>Identification and characterization of the ARIADNE gene family in Arabidopsis. A group of putative E3 ligases.</title>
        <authorList>
            <person name="Mladek C."/>
            <person name="Guger K."/>
            <person name="Hauser M.-T."/>
        </authorList>
    </citation>
    <scope>NUCLEOTIDE SEQUENCE [GENOMIC DNA]</scope>
    <scope>NOMENCLATURE</scope>
    <scope>GENE FAMILY</scope>
    <source>
        <strain>cv. Columbia</strain>
    </source>
</reference>
<reference key="2">
    <citation type="journal article" date="1997" name="DNA Res.">
        <title>Structural analysis of Arabidopsis thaliana chromosome 5. I. Sequence features of the 1.6 Mb regions covered by twenty physically assigned P1 clones.</title>
        <authorList>
            <person name="Sato S."/>
            <person name="Kotani H."/>
            <person name="Nakamura Y."/>
            <person name="Kaneko T."/>
            <person name="Asamizu E."/>
            <person name="Fukami M."/>
            <person name="Miyajima N."/>
            <person name="Tabata S."/>
        </authorList>
    </citation>
    <scope>NUCLEOTIDE SEQUENCE [LARGE SCALE GENOMIC DNA]</scope>
    <source>
        <strain>cv. Columbia</strain>
    </source>
</reference>
<reference key="3">
    <citation type="journal article" date="2017" name="Plant J.">
        <title>Araport11: a complete reannotation of the Arabidopsis thaliana reference genome.</title>
        <authorList>
            <person name="Cheng C.Y."/>
            <person name="Krishnakumar V."/>
            <person name="Chan A.P."/>
            <person name="Thibaud-Nissen F."/>
            <person name="Schobel S."/>
            <person name="Town C.D."/>
        </authorList>
    </citation>
    <scope>GENOME REANNOTATION</scope>
    <source>
        <strain>cv. Columbia</strain>
    </source>
</reference>
<reference key="4">
    <citation type="journal article" date="2004" name="Genome Res.">
        <title>Whole genome sequence comparisons and 'full-length' cDNA sequences: a combined approach to evaluate and improve Arabidopsis genome annotation.</title>
        <authorList>
            <person name="Castelli V."/>
            <person name="Aury J.-M."/>
            <person name="Jaillon O."/>
            <person name="Wincker P."/>
            <person name="Clepet C."/>
            <person name="Menard M."/>
            <person name="Cruaud C."/>
            <person name="Quetier F."/>
            <person name="Scarpelli C."/>
            <person name="Schaechter V."/>
            <person name="Temple G."/>
            <person name="Caboche M."/>
            <person name="Weissenbach J."/>
            <person name="Salanoubat M."/>
        </authorList>
    </citation>
    <scope>NUCLEOTIDE SEQUENCE [LARGE SCALE MRNA]</scope>
    <source>
        <strain>cv. Columbia</strain>
    </source>
</reference>
<reference key="5">
    <citation type="journal article" date="2002" name="Mol. Biol. Evol.">
        <title>Comparative genomics of the RBR family, including the Parkinson's disease-related gene parkin and the genes of the ariadne subfamily.</title>
        <authorList>
            <person name="Marin I."/>
            <person name="Ferrus A."/>
        </authorList>
    </citation>
    <scope>FUNCTION</scope>
</reference>
<organism>
    <name type="scientific">Arabidopsis thaliana</name>
    <name type="common">Mouse-ear cress</name>
    <dbReference type="NCBI Taxonomy" id="3702"/>
    <lineage>
        <taxon>Eukaryota</taxon>
        <taxon>Viridiplantae</taxon>
        <taxon>Streptophyta</taxon>
        <taxon>Embryophyta</taxon>
        <taxon>Tracheophyta</taxon>
        <taxon>Spermatophyta</taxon>
        <taxon>Magnoliopsida</taxon>
        <taxon>eudicotyledons</taxon>
        <taxon>Gunneridae</taxon>
        <taxon>Pentapetalae</taxon>
        <taxon>rosids</taxon>
        <taxon>malvids</taxon>
        <taxon>Brassicales</taxon>
        <taxon>Brassicaceae</taxon>
        <taxon>Camelineae</taxon>
        <taxon>Arabidopsis</taxon>
    </lineage>
</organism>
<accession>Q9FFN9</accession>
<dbReference type="EC" id="2.3.2.31" evidence="2"/>
<dbReference type="EMBL" id="AJ510216">
    <property type="protein sequence ID" value="CAD52895.1"/>
    <property type="molecule type" value="Genomic_DNA"/>
</dbReference>
<dbReference type="EMBL" id="AB005234">
    <property type="protein sequence ID" value="BAB10468.1"/>
    <property type="molecule type" value="Genomic_DNA"/>
</dbReference>
<dbReference type="EMBL" id="CP002688">
    <property type="protein sequence ID" value="AED97792.1"/>
    <property type="molecule type" value="Genomic_DNA"/>
</dbReference>
<dbReference type="EMBL" id="BX833901">
    <property type="status" value="NOT_ANNOTATED_CDS"/>
    <property type="molecule type" value="mRNA"/>
</dbReference>
<dbReference type="RefSeq" id="NP_201180.1">
    <property type="nucleotide sequence ID" value="NM_125770.3"/>
</dbReference>
<dbReference type="SMR" id="Q9FFN9"/>
<dbReference type="STRING" id="3702.Q9FFN9"/>
<dbReference type="PaxDb" id="3702-AT5G63750.1"/>
<dbReference type="ProteomicsDB" id="240616"/>
<dbReference type="EnsemblPlants" id="AT5G63750.1">
    <property type="protein sequence ID" value="AT5G63750.1"/>
    <property type="gene ID" value="AT5G63750"/>
</dbReference>
<dbReference type="GeneID" id="836495"/>
<dbReference type="Gramene" id="AT5G63750.1">
    <property type="protein sequence ID" value="AT5G63750.1"/>
    <property type="gene ID" value="AT5G63750"/>
</dbReference>
<dbReference type="KEGG" id="ath:AT5G63750"/>
<dbReference type="Araport" id="AT5G63750"/>
<dbReference type="TAIR" id="AT5G63750">
    <property type="gene designation" value="ARI13"/>
</dbReference>
<dbReference type="eggNOG" id="KOG1815">
    <property type="taxonomic scope" value="Eukaryota"/>
</dbReference>
<dbReference type="HOGENOM" id="CLU_009823_3_2_1"/>
<dbReference type="InParanoid" id="Q9FFN9"/>
<dbReference type="OMA" id="WEACEVS"/>
<dbReference type="OrthoDB" id="10009520at2759"/>
<dbReference type="PhylomeDB" id="Q9FFN9"/>
<dbReference type="UniPathway" id="UPA00143"/>
<dbReference type="PRO" id="PR:Q9FFN9"/>
<dbReference type="Proteomes" id="UP000006548">
    <property type="component" value="Chromosome 5"/>
</dbReference>
<dbReference type="ExpressionAtlas" id="Q9FFN9">
    <property type="expression patterns" value="baseline and differential"/>
</dbReference>
<dbReference type="GO" id="GO:0004842">
    <property type="term" value="F:ubiquitin-protein transferase activity"/>
    <property type="evidence" value="ECO:0007669"/>
    <property type="project" value="InterPro"/>
</dbReference>
<dbReference type="GO" id="GO:0008270">
    <property type="term" value="F:zinc ion binding"/>
    <property type="evidence" value="ECO:0007669"/>
    <property type="project" value="UniProtKB-KW"/>
</dbReference>
<dbReference type="GO" id="GO:0016567">
    <property type="term" value="P:protein ubiquitination"/>
    <property type="evidence" value="ECO:0007669"/>
    <property type="project" value="UniProtKB-UniPathway"/>
</dbReference>
<dbReference type="CDD" id="cd20346">
    <property type="entry name" value="BRcat_RBR_ANKIB1"/>
    <property type="match status" value="1"/>
</dbReference>
<dbReference type="FunFam" id="1.20.120.1750:FF:000049">
    <property type="entry name" value="Probable E3 ubiquitin-protein ligase ARI15"/>
    <property type="match status" value="1"/>
</dbReference>
<dbReference type="FunFam" id="3.30.40.10:FF:000892">
    <property type="entry name" value="Probable E3 ubiquitin-protein ligase ARI15"/>
    <property type="match status" value="1"/>
</dbReference>
<dbReference type="Gene3D" id="1.20.120.1750">
    <property type="match status" value="1"/>
</dbReference>
<dbReference type="Gene3D" id="3.30.40.10">
    <property type="entry name" value="Zinc/RING finger domain, C3HC4 (zinc finger)"/>
    <property type="match status" value="1"/>
</dbReference>
<dbReference type="InterPro" id="IPR031127">
    <property type="entry name" value="E3_UB_ligase_RBR"/>
</dbReference>
<dbReference type="InterPro" id="IPR002867">
    <property type="entry name" value="IBR_dom"/>
</dbReference>
<dbReference type="InterPro" id="IPR044066">
    <property type="entry name" value="TRIAD_supradom"/>
</dbReference>
<dbReference type="InterPro" id="IPR001876">
    <property type="entry name" value="Znf_RanBP2"/>
</dbReference>
<dbReference type="InterPro" id="IPR001841">
    <property type="entry name" value="Znf_RING"/>
</dbReference>
<dbReference type="InterPro" id="IPR013083">
    <property type="entry name" value="Znf_RING/FYVE/PHD"/>
</dbReference>
<dbReference type="PANTHER" id="PTHR11685">
    <property type="entry name" value="RBR FAMILY RING FINGER AND IBR DOMAIN-CONTAINING"/>
    <property type="match status" value="1"/>
</dbReference>
<dbReference type="Pfam" id="PF01485">
    <property type="entry name" value="IBR"/>
    <property type="match status" value="1"/>
</dbReference>
<dbReference type="SMART" id="SM00647">
    <property type="entry name" value="IBR"/>
    <property type="match status" value="2"/>
</dbReference>
<dbReference type="SUPFAM" id="SSF57850">
    <property type="entry name" value="RING/U-box"/>
    <property type="match status" value="2"/>
</dbReference>
<dbReference type="PROSITE" id="PS51873">
    <property type="entry name" value="TRIAD"/>
    <property type="match status" value="1"/>
</dbReference>
<dbReference type="PROSITE" id="PS01358">
    <property type="entry name" value="ZF_RANBP2_1"/>
    <property type="match status" value="1"/>
</dbReference>
<dbReference type="PROSITE" id="PS00518">
    <property type="entry name" value="ZF_RING_1"/>
    <property type="match status" value="1"/>
</dbReference>
<dbReference type="PROSITE" id="PS50089">
    <property type="entry name" value="ZF_RING_2"/>
    <property type="match status" value="1"/>
</dbReference>
<protein>
    <recommendedName>
        <fullName>Probable E3 ubiquitin-protein ligase ARI13</fullName>
        <ecNumber evidence="2">2.3.2.31</ecNumber>
    </recommendedName>
    <alternativeName>
        <fullName>ARIADNE-like protein ARI13</fullName>
    </alternativeName>
    <alternativeName>
        <fullName>Protein ariadne homolog 13</fullName>
    </alternativeName>
    <alternativeName>
        <fullName evidence="5">RING-type E3 ubiquitin transferase ARI13</fullName>
    </alternativeName>
</protein>